<name>TAF5_CAEEL</name>
<accession>G5EF68</accession>
<dbReference type="EMBL" id="BX284601">
    <property type="protein sequence ID" value="CAB03035.2"/>
    <property type="molecule type" value="Genomic_DNA"/>
</dbReference>
<dbReference type="PIR" id="T21580">
    <property type="entry name" value="T21580"/>
</dbReference>
<dbReference type="RefSeq" id="NP_492169.2">
    <property type="nucleotide sequence ID" value="NM_059768.8"/>
</dbReference>
<dbReference type="SMR" id="G5EF68"/>
<dbReference type="FunCoup" id="G5EF68">
    <property type="interactions" value="2688"/>
</dbReference>
<dbReference type="IntAct" id="G5EF68">
    <property type="interactions" value="1"/>
</dbReference>
<dbReference type="STRING" id="6239.F30F8.8.3"/>
<dbReference type="PaxDb" id="6239-F30F8.8.2"/>
<dbReference type="PeptideAtlas" id="G5EF68"/>
<dbReference type="EnsemblMetazoa" id="F30F8.8.1">
    <property type="protein sequence ID" value="F30F8.8.1"/>
    <property type="gene ID" value="WBGene00006386"/>
</dbReference>
<dbReference type="EnsemblMetazoa" id="F30F8.8.2">
    <property type="protein sequence ID" value="F30F8.8.2"/>
    <property type="gene ID" value="WBGene00006386"/>
</dbReference>
<dbReference type="GeneID" id="172552"/>
<dbReference type="KEGG" id="cel:CELE_F30F8.8"/>
<dbReference type="AGR" id="WB:WBGene00006386"/>
<dbReference type="CTD" id="172552"/>
<dbReference type="WormBase" id="F30F8.8">
    <property type="protein sequence ID" value="CE39361"/>
    <property type="gene ID" value="WBGene00006386"/>
    <property type="gene designation" value="taf-5"/>
</dbReference>
<dbReference type="eggNOG" id="KOG0263">
    <property type="taxonomic scope" value="Eukaryota"/>
</dbReference>
<dbReference type="GeneTree" id="ENSGT00940000153342"/>
<dbReference type="HOGENOM" id="CLU_005884_2_1_1"/>
<dbReference type="InParanoid" id="G5EF68"/>
<dbReference type="OMA" id="HNHPVWD"/>
<dbReference type="OrthoDB" id="10266330at2759"/>
<dbReference type="PhylomeDB" id="G5EF68"/>
<dbReference type="Reactome" id="R-CEL-674695">
    <property type="pathway name" value="RNA Polymerase II Pre-transcription Events"/>
</dbReference>
<dbReference type="Reactome" id="R-CEL-6807505">
    <property type="pathway name" value="RNA polymerase II transcribes snRNA genes"/>
</dbReference>
<dbReference type="Reactome" id="R-CEL-73776">
    <property type="pathway name" value="RNA Polymerase II Promoter Escape"/>
</dbReference>
<dbReference type="Reactome" id="R-CEL-73779">
    <property type="pathway name" value="RNA Polymerase II Transcription Pre-Initiation And Promoter Opening"/>
</dbReference>
<dbReference type="Reactome" id="R-CEL-75953">
    <property type="pathway name" value="RNA Polymerase II Transcription Initiation"/>
</dbReference>
<dbReference type="Reactome" id="R-CEL-76042">
    <property type="pathway name" value="RNA Polymerase II Transcription Initiation And Promoter Clearance"/>
</dbReference>
<dbReference type="Reactome" id="R-CEL-9907900">
    <property type="pathway name" value="Proteasome assembly"/>
</dbReference>
<dbReference type="PRO" id="PR:G5EF68"/>
<dbReference type="Proteomes" id="UP000001940">
    <property type="component" value="Chromosome I"/>
</dbReference>
<dbReference type="Bgee" id="WBGene00006386">
    <property type="expression patterns" value="Expressed in germ line (C elegans) and 4 other cell types or tissues"/>
</dbReference>
<dbReference type="GO" id="GO:0005634">
    <property type="term" value="C:nucleus"/>
    <property type="evidence" value="ECO:0000314"/>
    <property type="project" value="UniProtKB"/>
</dbReference>
<dbReference type="GO" id="GO:0000124">
    <property type="term" value="C:SAGA complex"/>
    <property type="evidence" value="ECO:0000318"/>
    <property type="project" value="GO_Central"/>
</dbReference>
<dbReference type="GO" id="GO:0005669">
    <property type="term" value="C:transcription factor TFIID complex"/>
    <property type="evidence" value="ECO:0000318"/>
    <property type="project" value="GO_Central"/>
</dbReference>
<dbReference type="GO" id="GO:0009792">
    <property type="term" value="P:embryo development ending in birth or egg hatching"/>
    <property type="evidence" value="ECO:0000315"/>
    <property type="project" value="UniProtKB"/>
</dbReference>
<dbReference type="GO" id="GO:0006366">
    <property type="term" value="P:transcription by RNA polymerase II"/>
    <property type="evidence" value="ECO:0000315"/>
    <property type="project" value="UniProtKB"/>
</dbReference>
<dbReference type="GO" id="GO:0006367">
    <property type="term" value="P:transcription initiation at RNA polymerase II promoter"/>
    <property type="evidence" value="ECO:0000318"/>
    <property type="project" value="GO_Central"/>
</dbReference>
<dbReference type="CDD" id="cd08044">
    <property type="entry name" value="TAF5_NTD2"/>
    <property type="match status" value="1"/>
</dbReference>
<dbReference type="CDD" id="cd00200">
    <property type="entry name" value="WD40"/>
    <property type="match status" value="1"/>
</dbReference>
<dbReference type="Gene3D" id="1.25.40.500">
    <property type="entry name" value="TFIID subunit TAF5, NTD2 domain"/>
    <property type="match status" value="1"/>
</dbReference>
<dbReference type="Gene3D" id="2.130.10.10">
    <property type="entry name" value="YVTN repeat-like/Quinoprotein amine dehydrogenase"/>
    <property type="match status" value="2"/>
</dbReference>
<dbReference type="InterPro" id="IPR020472">
    <property type="entry name" value="G-protein_beta_WD-40_rep"/>
</dbReference>
<dbReference type="InterPro" id="IPR006594">
    <property type="entry name" value="LisH"/>
</dbReference>
<dbReference type="InterPro" id="IPR007582">
    <property type="entry name" value="TFIID_NTD2"/>
</dbReference>
<dbReference type="InterPro" id="IPR037264">
    <property type="entry name" value="TFIID_NTD2_sf"/>
</dbReference>
<dbReference type="InterPro" id="IPR015943">
    <property type="entry name" value="WD40/YVTN_repeat-like_dom_sf"/>
</dbReference>
<dbReference type="InterPro" id="IPR019775">
    <property type="entry name" value="WD40_repeat_CS"/>
</dbReference>
<dbReference type="InterPro" id="IPR036322">
    <property type="entry name" value="WD40_repeat_dom_sf"/>
</dbReference>
<dbReference type="InterPro" id="IPR001680">
    <property type="entry name" value="WD40_rpt"/>
</dbReference>
<dbReference type="PANTHER" id="PTHR19879:SF1">
    <property type="entry name" value="CANNONBALL-RELATED"/>
    <property type="match status" value="1"/>
</dbReference>
<dbReference type="PANTHER" id="PTHR19879">
    <property type="entry name" value="TRANSCRIPTION INITIATION FACTOR TFIID"/>
    <property type="match status" value="1"/>
</dbReference>
<dbReference type="Pfam" id="PF04494">
    <property type="entry name" value="TFIID_NTD2"/>
    <property type="match status" value="1"/>
</dbReference>
<dbReference type="Pfam" id="PF00400">
    <property type="entry name" value="WD40"/>
    <property type="match status" value="4"/>
</dbReference>
<dbReference type="PRINTS" id="PR00320">
    <property type="entry name" value="GPROTEINBRPT"/>
</dbReference>
<dbReference type="SMART" id="SM00667">
    <property type="entry name" value="LisH"/>
    <property type="match status" value="1"/>
</dbReference>
<dbReference type="SMART" id="SM00320">
    <property type="entry name" value="WD40"/>
    <property type="match status" value="5"/>
</dbReference>
<dbReference type="SUPFAM" id="SSF160897">
    <property type="entry name" value="Taf5 N-terminal domain-like"/>
    <property type="match status" value="1"/>
</dbReference>
<dbReference type="SUPFAM" id="SSF50978">
    <property type="entry name" value="WD40 repeat-like"/>
    <property type="match status" value="1"/>
</dbReference>
<dbReference type="PROSITE" id="PS50896">
    <property type="entry name" value="LISH"/>
    <property type="match status" value="1"/>
</dbReference>
<dbReference type="PROSITE" id="PS00678">
    <property type="entry name" value="WD_REPEATS_1"/>
    <property type="match status" value="1"/>
</dbReference>
<dbReference type="PROSITE" id="PS50082">
    <property type="entry name" value="WD_REPEATS_2"/>
    <property type="match status" value="3"/>
</dbReference>
<dbReference type="PROSITE" id="PS50294">
    <property type="entry name" value="WD_REPEATS_REGION"/>
    <property type="match status" value="1"/>
</dbReference>
<sequence>MDSENSSSHSISSPQMFQNTHNNSAMEDNLLSRPMNNESLQMIIGYLRRNGLTETEELLTREAGPVLRVEGSNGLPPEEAISVEFDTFVQHANDCTDVVQAEFSQLLFPIFAHSYIALIEKHAATARIFFNRFKIFIPECFSEFVYQLSLIEDAMTLRANEHVHILRENKFLVRLSRPTLKHLESIQTRVIGVKNIIAKHICIENADEVSTNRTTIETQMGGILGVTSKSDKRHKMMFSVLKDELMQNIEKRKTKGKDWKDMGKKMQTHCPQADRIPLPPISEHLREERRNWLRDVGKMAIISAESPVSICMYTTVNAPIGVASCDFTDDSSLIAMGLSDSSIVMNAMDPMNKMKKLRDMEFLDKIDIETADNVQSQMFDLQGSTTSVRYTGHGGPVFSVNFSPDRRLLISSAGDRTVRLWSMETQRNAVIYRTPAVVWQAQFCSRGYYFATASADKTAAMWSTDRMHPLRIFADPYGDVGCIDYHPNCNYIAGGSDDRYVRVWDVCSGTRVRIFSGHKASIIAVKFSPCGRYIVSLDAIGNLMIWDLAYQRLVAAEITEQAGTKGSITFSRDGGVFAVSHGNSSIQLYSLDTLIGTVLAAGQNDSYIEPKVNLDGFNIGSYATKETAVIGLHFTRRNLLLGFGCFGQ</sequence>
<reference evidence="8" key="1">
    <citation type="journal article" date="1998" name="Science">
        <title>Genome sequence of the nematode C. elegans: a platform for investigating biology.</title>
        <authorList>
            <consortium name="The C. elegans sequencing consortium"/>
        </authorList>
    </citation>
    <scope>NUCLEOTIDE SEQUENCE [LARGE SCALE GENOMIC DNA]</scope>
    <source>
        <strain evidence="8">Bristol N2</strain>
    </source>
</reference>
<reference evidence="7" key="2">
    <citation type="journal article" date="2002" name="Genes Dev.">
        <title>A unified nomenclature for TATA box binding protein (TBP)-associated factors (TAFs) involved in RNA polymerase II transcription.</title>
        <authorList>
            <person name="Tora L."/>
        </authorList>
    </citation>
    <scope>NOMENCLATURE</scope>
</reference>
<reference evidence="7" key="3">
    <citation type="journal article" date="2003" name="J. Biol. Chem.">
        <title>A broad but restricted requirement for TAF-5 (human TAFII100) for embryonic transcription in Caenorhabditis elegans.</title>
        <authorList>
            <person name="Walker A.K."/>
            <person name="Blackwell T.K."/>
        </authorList>
    </citation>
    <scope>FUNCTION</scope>
    <scope>SUBCELLULAR LOCATION</scope>
    <scope>DEVELOPMENTAL STAGE</scope>
    <scope>DISRUPTION PHENOTYPE</scope>
</reference>
<comment type="function">
    <text evidence="1 5">The TFIID basal transcription factor complex plays a major role in the initiation of RNA polymerase II (Pol II)-dependent transcription (By similarity). TFIID recognizes and binds promoters via its subunit tbp-1, a TATA-box-binding protein, and promotes assembly of the pre-initiation complex (PIC) (By similarity). The TFIID complex consists of tbp-1 and TBP-associated factors (TAFs), including taf-5 (By similarity). Essential for early embryonic development, but not required for transcription of some genes; probably acts via activating transcription initiation by RNA Pol II, as part of the TFIID complex (PubMed:12458202).</text>
</comment>
<comment type="subunit">
    <text evidence="1">Component of the TFIID basal transcription factor complex, composed of TATA-box-binding protein tbp-1, and a number of TBP-associated factors (TAFs).</text>
</comment>
<comment type="subcellular location">
    <subcellularLocation>
        <location evidence="5">Nucleus</location>
    </subcellularLocation>
</comment>
<comment type="developmental stage">
    <text evidence="5">Expressed in embryos (at protein level).</text>
</comment>
<comment type="disruption phenotype">
    <text evidence="5">RNAi-mediated knockdown causes arrested development at 90-100 cells and inhibits differentiation (PubMed:12458202). The two E cell daughters (E2 cells), which form the endoderm, divide abnormally early (PubMed:12458202). Phosphorylation of the RNA Pol II large subunit C-terminal domain (CTD) is reduced significantly in embryos (PubMed:12458202). Reduces expression of a range of genes, including let-858, rps-5, hsp16.2, and pes-10, but has little or no effect on expression of cki-2 and sur-5 (PubMed:12458202). Has little or no effect on levels of the TFIID subunits taf-10 and taf-4 (PubMed:12458202).</text>
</comment>
<comment type="similarity">
    <text evidence="7">Belongs to the WD repeat TAF5 family.</text>
</comment>
<comment type="caution">
    <text evidence="6">The gene name for this protein was previously taf-4 (PubMed:11963920). The nomenclature was changed in PMID:11963920 and so readers should take care to avoid confusion (PubMed:11963920).</text>
</comment>
<gene>
    <name evidence="9" type="primary">taf-5</name>
    <name evidence="9" type="ORF">F30F8.8</name>
</gene>
<feature type="chain" id="PRO_0000455414" description="Transcription initiation factor TFIID subunit 5">
    <location>
        <begin position="1"/>
        <end position="648"/>
    </location>
</feature>
<feature type="domain" description="LisH" evidence="3">
    <location>
        <begin position="35"/>
        <end position="67"/>
    </location>
</feature>
<feature type="repeat" description="WD 1" evidence="2">
    <location>
        <begin position="317"/>
        <end position="358"/>
    </location>
</feature>
<feature type="repeat" description="WD 2" evidence="2">
    <location>
        <begin position="392"/>
        <end position="431"/>
    </location>
</feature>
<feature type="repeat" description="WD 3" evidence="2">
    <location>
        <begin position="433"/>
        <end position="472"/>
    </location>
</feature>
<feature type="repeat" description="WD 4" evidence="2">
    <location>
        <begin position="475"/>
        <end position="514"/>
    </location>
</feature>
<feature type="repeat" description="WD 5" evidence="2">
    <location>
        <begin position="517"/>
        <end position="556"/>
    </location>
</feature>
<feature type="repeat" description="WD 6" evidence="2">
    <location>
        <begin position="560"/>
        <end position="599"/>
    </location>
</feature>
<feature type="region of interest" description="Disordered" evidence="4">
    <location>
        <begin position="1"/>
        <end position="21"/>
    </location>
</feature>
<feature type="compositionally biased region" description="Low complexity" evidence="4">
    <location>
        <begin position="1"/>
        <end position="13"/>
    </location>
</feature>
<evidence type="ECO:0000250" key="1">
    <source>
        <dbReference type="UniProtKB" id="Q15542"/>
    </source>
</evidence>
<evidence type="ECO:0000255" key="2"/>
<evidence type="ECO:0000255" key="3">
    <source>
        <dbReference type="PROSITE-ProRule" id="PRU00126"/>
    </source>
</evidence>
<evidence type="ECO:0000256" key="4">
    <source>
        <dbReference type="SAM" id="MobiDB-lite"/>
    </source>
</evidence>
<evidence type="ECO:0000269" key="5">
    <source>
    </source>
</evidence>
<evidence type="ECO:0000303" key="6">
    <source>
    </source>
</evidence>
<evidence type="ECO:0000305" key="7"/>
<evidence type="ECO:0000312" key="8">
    <source>
        <dbReference type="Proteomes" id="UP000001940"/>
    </source>
</evidence>
<evidence type="ECO:0000312" key="9">
    <source>
        <dbReference type="WormBase" id="F30F8.8"/>
    </source>
</evidence>
<proteinExistence type="evidence at protein level"/>
<keyword id="KW-0539">Nucleus</keyword>
<keyword id="KW-1185">Reference proteome</keyword>
<keyword id="KW-0677">Repeat</keyword>
<keyword id="KW-0804">Transcription</keyword>
<keyword id="KW-0805">Transcription regulation</keyword>
<keyword id="KW-0853">WD repeat</keyword>
<protein>
    <recommendedName>
        <fullName evidence="7">Transcription initiation factor TFIID subunit 5</fullName>
    </recommendedName>
    <alternativeName>
        <fullName evidence="9">TBP-associated transcription factor family member taf-5</fullName>
    </alternativeName>
</protein>
<organism evidence="8">
    <name type="scientific">Caenorhabditis elegans</name>
    <dbReference type="NCBI Taxonomy" id="6239"/>
    <lineage>
        <taxon>Eukaryota</taxon>
        <taxon>Metazoa</taxon>
        <taxon>Ecdysozoa</taxon>
        <taxon>Nematoda</taxon>
        <taxon>Chromadorea</taxon>
        <taxon>Rhabditida</taxon>
        <taxon>Rhabditina</taxon>
        <taxon>Rhabditomorpha</taxon>
        <taxon>Rhabditoidea</taxon>
        <taxon>Rhabditidae</taxon>
        <taxon>Peloderinae</taxon>
        <taxon>Caenorhabditis</taxon>
    </lineage>
</organism>